<feature type="chain" id="PRO_1000058271" description="Translational regulator CsrA">
    <location>
        <begin position="1"/>
        <end position="76"/>
    </location>
</feature>
<evidence type="ECO:0000255" key="1">
    <source>
        <dbReference type="HAMAP-Rule" id="MF_00167"/>
    </source>
</evidence>
<reference key="1">
    <citation type="submission" date="2007-08" db="EMBL/GenBank/DDBJ databases">
        <title>Complete sequence of Thermotoga lettingae TMO.</title>
        <authorList>
            <consortium name="US DOE Joint Genome Institute"/>
            <person name="Copeland A."/>
            <person name="Lucas S."/>
            <person name="Lapidus A."/>
            <person name="Barry K."/>
            <person name="Glavina del Rio T."/>
            <person name="Dalin E."/>
            <person name="Tice H."/>
            <person name="Pitluck S."/>
            <person name="Foster B."/>
            <person name="Bruce D."/>
            <person name="Schmutz J."/>
            <person name="Larimer F."/>
            <person name="Land M."/>
            <person name="Hauser L."/>
            <person name="Kyrpides N."/>
            <person name="Mikhailova N."/>
            <person name="Nelson K."/>
            <person name="Gogarten J.P."/>
            <person name="Noll K."/>
            <person name="Richardson P."/>
        </authorList>
    </citation>
    <scope>NUCLEOTIDE SEQUENCE [LARGE SCALE GENOMIC DNA]</scope>
    <source>
        <strain>ATCC BAA-301 / DSM 14385 / NBRC 107922 / TMO</strain>
    </source>
</reference>
<dbReference type="EMBL" id="CP000812">
    <property type="protein sequence ID" value="ABV33235.1"/>
    <property type="molecule type" value="Genomic_DNA"/>
</dbReference>
<dbReference type="SMR" id="A8F501"/>
<dbReference type="STRING" id="416591.Tlet_0669"/>
<dbReference type="KEGG" id="tle:Tlet_0669"/>
<dbReference type="eggNOG" id="COG1551">
    <property type="taxonomic scope" value="Bacteria"/>
</dbReference>
<dbReference type="HOGENOM" id="CLU_164837_0_0_0"/>
<dbReference type="OrthoDB" id="9809061at2"/>
<dbReference type="Proteomes" id="UP000002016">
    <property type="component" value="Chromosome"/>
</dbReference>
<dbReference type="GO" id="GO:0005829">
    <property type="term" value="C:cytosol"/>
    <property type="evidence" value="ECO:0007669"/>
    <property type="project" value="TreeGrafter"/>
</dbReference>
<dbReference type="GO" id="GO:0048027">
    <property type="term" value="F:mRNA 5'-UTR binding"/>
    <property type="evidence" value="ECO:0007669"/>
    <property type="project" value="UniProtKB-UniRule"/>
</dbReference>
<dbReference type="GO" id="GO:0044781">
    <property type="term" value="P:bacterial-type flagellum organization"/>
    <property type="evidence" value="ECO:0007669"/>
    <property type="project" value="UniProtKB-KW"/>
</dbReference>
<dbReference type="GO" id="GO:0006402">
    <property type="term" value="P:mRNA catabolic process"/>
    <property type="evidence" value="ECO:0007669"/>
    <property type="project" value="InterPro"/>
</dbReference>
<dbReference type="GO" id="GO:0045947">
    <property type="term" value="P:negative regulation of translational initiation"/>
    <property type="evidence" value="ECO:0007669"/>
    <property type="project" value="UniProtKB-UniRule"/>
</dbReference>
<dbReference type="GO" id="GO:1902208">
    <property type="term" value="P:regulation of bacterial-type flagellum assembly"/>
    <property type="evidence" value="ECO:0007669"/>
    <property type="project" value="UniProtKB-UniRule"/>
</dbReference>
<dbReference type="GO" id="GO:0006109">
    <property type="term" value="P:regulation of carbohydrate metabolic process"/>
    <property type="evidence" value="ECO:0007669"/>
    <property type="project" value="InterPro"/>
</dbReference>
<dbReference type="FunFam" id="2.60.40.4380:FF:000002">
    <property type="entry name" value="Translational regulator CsrA"/>
    <property type="match status" value="1"/>
</dbReference>
<dbReference type="Gene3D" id="2.60.40.4380">
    <property type="entry name" value="Translational regulator CsrA"/>
    <property type="match status" value="1"/>
</dbReference>
<dbReference type="HAMAP" id="MF_00167">
    <property type="entry name" value="CsrA"/>
    <property type="match status" value="1"/>
</dbReference>
<dbReference type="InterPro" id="IPR003751">
    <property type="entry name" value="CsrA"/>
</dbReference>
<dbReference type="InterPro" id="IPR036107">
    <property type="entry name" value="CsrA_sf"/>
</dbReference>
<dbReference type="NCBIfam" id="TIGR00202">
    <property type="entry name" value="csrA"/>
    <property type="match status" value="1"/>
</dbReference>
<dbReference type="NCBIfam" id="NF002469">
    <property type="entry name" value="PRK01712.1"/>
    <property type="match status" value="1"/>
</dbReference>
<dbReference type="PANTHER" id="PTHR34984">
    <property type="entry name" value="CARBON STORAGE REGULATOR"/>
    <property type="match status" value="1"/>
</dbReference>
<dbReference type="PANTHER" id="PTHR34984:SF1">
    <property type="entry name" value="CARBON STORAGE REGULATOR"/>
    <property type="match status" value="1"/>
</dbReference>
<dbReference type="Pfam" id="PF02599">
    <property type="entry name" value="CsrA"/>
    <property type="match status" value="1"/>
</dbReference>
<dbReference type="SUPFAM" id="SSF117130">
    <property type="entry name" value="CsrA-like"/>
    <property type="match status" value="1"/>
</dbReference>
<gene>
    <name evidence="1" type="primary">csrA</name>
    <name type="ordered locus">Tlet_0669</name>
</gene>
<accession>A8F501</accession>
<keyword id="KW-1005">Bacterial flagellum biogenesis</keyword>
<keyword id="KW-0963">Cytoplasm</keyword>
<keyword id="KW-1185">Reference proteome</keyword>
<keyword id="KW-0678">Repressor</keyword>
<keyword id="KW-0694">RNA-binding</keyword>
<keyword id="KW-0810">Translation regulation</keyword>
<comment type="function">
    <text evidence="1">A translational regulator that binds mRNA to regulate translation initiation and/or mRNA stability. Usually binds in the 5'-UTR at or near the Shine-Dalgarno sequence preventing ribosome-binding, thus repressing translation. Its main target seems to be the major flagellin gene, while its function is anatagonized by FliW.</text>
</comment>
<comment type="subunit">
    <text evidence="1">Homodimer; the beta-strands of each monomer intercalate to form a hydrophobic core, while the alpha-helices form wings that extend away from the core.</text>
</comment>
<comment type="subcellular location">
    <subcellularLocation>
        <location evidence="1">Cytoplasm</location>
    </subcellularLocation>
</comment>
<comment type="similarity">
    <text evidence="1">Belongs to the CsrA/RsmA family.</text>
</comment>
<proteinExistence type="inferred from homology"/>
<organism>
    <name type="scientific">Pseudothermotoga lettingae (strain ATCC BAA-301 / DSM 14385 / NBRC 107922 / TMO)</name>
    <name type="common">Thermotoga lettingae</name>
    <dbReference type="NCBI Taxonomy" id="416591"/>
    <lineage>
        <taxon>Bacteria</taxon>
        <taxon>Thermotogati</taxon>
        <taxon>Thermotogota</taxon>
        <taxon>Thermotogae</taxon>
        <taxon>Thermotogales</taxon>
        <taxon>Thermotogaceae</taxon>
        <taxon>Pseudothermotoga</taxon>
    </lineage>
</organism>
<sequence>MLVISRKSGESFMIGDSIEVKILRIEGSEVKIGISAPSHVKIYRAEIYQKIVKENKMAVQVDIVDLSEVIFLDRNK</sequence>
<protein>
    <recommendedName>
        <fullName evidence="1">Translational regulator CsrA</fullName>
    </recommendedName>
</protein>
<name>CSRA_PSELT</name>